<name>CLPB_RICPR</name>
<reference key="1">
    <citation type="journal article" date="1998" name="Nature">
        <title>The genome sequence of Rickettsia prowazekii and the origin of mitochondria.</title>
        <authorList>
            <person name="Andersson S.G.E."/>
            <person name="Zomorodipour A."/>
            <person name="Andersson J.O."/>
            <person name="Sicheritz-Ponten T."/>
            <person name="Alsmark U.C.M."/>
            <person name="Podowski R.M."/>
            <person name="Naeslund A.K."/>
            <person name="Eriksson A.-S."/>
            <person name="Winkler H.H."/>
            <person name="Kurland C.G."/>
        </authorList>
    </citation>
    <scope>NUCLEOTIDE SEQUENCE [LARGE SCALE GENOMIC DNA]</scope>
    <source>
        <strain>Madrid E</strain>
    </source>
</reference>
<keyword id="KW-0067">ATP-binding</keyword>
<keyword id="KW-0143">Chaperone</keyword>
<keyword id="KW-0175">Coiled coil</keyword>
<keyword id="KW-0963">Cytoplasm</keyword>
<keyword id="KW-0547">Nucleotide-binding</keyword>
<keyword id="KW-1185">Reference proteome</keyword>
<keyword id="KW-0677">Repeat</keyword>
<keyword id="KW-0346">Stress response</keyword>
<dbReference type="EMBL" id="AJ235270">
    <property type="protein sequence ID" value="CAA14507.1"/>
    <property type="molecule type" value="Genomic_DNA"/>
</dbReference>
<dbReference type="PIR" id="D71711">
    <property type="entry name" value="D71711"/>
</dbReference>
<dbReference type="RefSeq" id="NP_220430.1">
    <property type="nucleotide sequence ID" value="NC_000963.1"/>
</dbReference>
<dbReference type="RefSeq" id="WP_004596648.1">
    <property type="nucleotide sequence ID" value="NC_000963.1"/>
</dbReference>
<dbReference type="SMR" id="Q9ZEA9"/>
<dbReference type="STRING" id="272947.gene:17555119"/>
<dbReference type="EnsemblBacteria" id="CAA14507">
    <property type="protein sequence ID" value="CAA14507"/>
    <property type="gene ID" value="CAA14507"/>
</dbReference>
<dbReference type="GeneID" id="57569164"/>
<dbReference type="KEGG" id="rpr:RP036"/>
<dbReference type="PATRIC" id="fig|272947.5.peg.37"/>
<dbReference type="eggNOG" id="COG0542">
    <property type="taxonomic scope" value="Bacteria"/>
</dbReference>
<dbReference type="HOGENOM" id="CLU_005070_4_1_5"/>
<dbReference type="OrthoDB" id="9803641at2"/>
<dbReference type="Proteomes" id="UP000002480">
    <property type="component" value="Chromosome"/>
</dbReference>
<dbReference type="GO" id="GO:0005737">
    <property type="term" value="C:cytoplasm"/>
    <property type="evidence" value="ECO:0007669"/>
    <property type="project" value="UniProtKB-SubCell"/>
</dbReference>
<dbReference type="GO" id="GO:0005524">
    <property type="term" value="F:ATP binding"/>
    <property type="evidence" value="ECO:0007669"/>
    <property type="project" value="UniProtKB-KW"/>
</dbReference>
<dbReference type="GO" id="GO:0016887">
    <property type="term" value="F:ATP hydrolysis activity"/>
    <property type="evidence" value="ECO:0007669"/>
    <property type="project" value="InterPro"/>
</dbReference>
<dbReference type="GO" id="GO:0034605">
    <property type="term" value="P:cellular response to heat"/>
    <property type="evidence" value="ECO:0007669"/>
    <property type="project" value="TreeGrafter"/>
</dbReference>
<dbReference type="GO" id="GO:0042026">
    <property type="term" value="P:protein refolding"/>
    <property type="evidence" value="ECO:0007669"/>
    <property type="project" value="InterPro"/>
</dbReference>
<dbReference type="CDD" id="cd00009">
    <property type="entry name" value="AAA"/>
    <property type="match status" value="1"/>
</dbReference>
<dbReference type="CDD" id="cd19499">
    <property type="entry name" value="RecA-like_ClpB_Hsp104-like"/>
    <property type="match status" value="1"/>
</dbReference>
<dbReference type="FunFam" id="3.40.50.300:FF:000120">
    <property type="entry name" value="ATP-dependent chaperone ClpB"/>
    <property type="match status" value="1"/>
</dbReference>
<dbReference type="FunFam" id="3.40.50.300:FF:000025">
    <property type="entry name" value="ATP-dependent Clp protease subunit"/>
    <property type="match status" value="1"/>
</dbReference>
<dbReference type="FunFam" id="3.40.50.300:FF:000010">
    <property type="entry name" value="Chaperone clpB 1, putative"/>
    <property type="match status" value="1"/>
</dbReference>
<dbReference type="Gene3D" id="1.10.8.60">
    <property type="match status" value="1"/>
</dbReference>
<dbReference type="Gene3D" id="1.10.1780.10">
    <property type="entry name" value="Clp, N-terminal domain"/>
    <property type="match status" value="1"/>
</dbReference>
<dbReference type="Gene3D" id="3.40.50.300">
    <property type="entry name" value="P-loop containing nucleotide triphosphate hydrolases"/>
    <property type="match status" value="3"/>
</dbReference>
<dbReference type="InterPro" id="IPR003593">
    <property type="entry name" value="AAA+_ATPase"/>
</dbReference>
<dbReference type="InterPro" id="IPR003959">
    <property type="entry name" value="ATPase_AAA_core"/>
</dbReference>
<dbReference type="InterPro" id="IPR017730">
    <property type="entry name" value="Chaperonin_ClpB"/>
</dbReference>
<dbReference type="InterPro" id="IPR019489">
    <property type="entry name" value="Clp_ATPase_C"/>
</dbReference>
<dbReference type="InterPro" id="IPR036628">
    <property type="entry name" value="Clp_N_dom_sf"/>
</dbReference>
<dbReference type="InterPro" id="IPR004176">
    <property type="entry name" value="Clp_R_dom"/>
</dbReference>
<dbReference type="InterPro" id="IPR001270">
    <property type="entry name" value="ClpA/B"/>
</dbReference>
<dbReference type="InterPro" id="IPR018368">
    <property type="entry name" value="ClpA/B_CS1"/>
</dbReference>
<dbReference type="InterPro" id="IPR028299">
    <property type="entry name" value="ClpA/B_CS2"/>
</dbReference>
<dbReference type="InterPro" id="IPR041546">
    <property type="entry name" value="ClpA/ClpB_AAA_lid"/>
</dbReference>
<dbReference type="InterPro" id="IPR050130">
    <property type="entry name" value="ClpA_ClpB"/>
</dbReference>
<dbReference type="InterPro" id="IPR027417">
    <property type="entry name" value="P-loop_NTPase"/>
</dbReference>
<dbReference type="NCBIfam" id="TIGR03346">
    <property type="entry name" value="chaperone_ClpB"/>
    <property type="match status" value="1"/>
</dbReference>
<dbReference type="PANTHER" id="PTHR11638">
    <property type="entry name" value="ATP-DEPENDENT CLP PROTEASE"/>
    <property type="match status" value="1"/>
</dbReference>
<dbReference type="PANTHER" id="PTHR11638:SF18">
    <property type="entry name" value="HEAT SHOCK PROTEIN 104"/>
    <property type="match status" value="1"/>
</dbReference>
<dbReference type="Pfam" id="PF00004">
    <property type="entry name" value="AAA"/>
    <property type="match status" value="1"/>
</dbReference>
<dbReference type="Pfam" id="PF07724">
    <property type="entry name" value="AAA_2"/>
    <property type="match status" value="1"/>
</dbReference>
<dbReference type="Pfam" id="PF17871">
    <property type="entry name" value="AAA_lid_9"/>
    <property type="match status" value="1"/>
</dbReference>
<dbReference type="Pfam" id="PF02861">
    <property type="entry name" value="Clp_N"/>
    <property type="match status" value="2"/>
</dbReference>
<dbReference type="Pfam" id="PF10431">
    <property type="entry name" value="ClpB_D2-small"/>
    <property type="match status" value="1"/>
</dbReference>
<dbReference type="PRINTS" id="PR00300">
    <property type="entry name" value="CLPPROTEASEA"/>
</dbReference>
<dbReference type="SMART" id="SM00382">
    <property type="entry name" value="AAA"/>
    <property type="match status" value="2"/>
</dbReference>
<dbReference type="SMART" id="SM01086">
    <property type="entry name" value="ClpB_D2-small"/>
    <property type="match status" value="1"/>
</dbReference>
<dbReference type="SUPFAM" id="SSF81923">
    <property type="entry name" value="Double Clp-N motif"/>
    <property type="match status" value="1"/>
</dbReference>
<dbReference type="SUPFAM" id="SSF52540">
    <property type="entry name" value="P-loop containing nucleoside triphosphate hydrolases"/>
    <property type="match status" value="2"/>
</dbReference>
<dbReference type="PROSITE" id="PS51903">
    <property type="entry name" value="CLP_R"/>
    <property type="match status" value="1"/>
</dbReference>
<dbReference type="PROSITE" id="PS00870">
    <property type="entry name" value="CLPAB_1"/>
    <property type="match status" value="1"/>
</dbReference>
<dbReference type="PROSITE" id="PS00871">
    <property type="entry name" value="CLPAB_2"/>
    <property type="match status" value="1"/>
</dbReference>
<proteinExistence type="inferred from homology"/>
<organism>
    <name type="scientific">Rickettsia prowazekii (strain Madrid E)</name>
    <dbReference type="NCBI Taxonomy" id="272947"/>
    <lineage>
        <taxon>Bacteria</taxon>
        <taxon>Pseudomonadati</taxon>
        <taxon>Pseudomonadota</taxon>
        <taxon>Alphaproteobacteria</taxon>
        <taxon>Rickettsiales</taxon>
        <taxon>Rickettsiaceae</taxon>
        <taxon>Rickettsieae</taxon>
        <taxon>Rickettsia</taxon>
        <taxon>typhus group</taxon>
    </lineage>
</organism>
<comment type="function">
    <text evidence="1">Part of a stress-induced multi-chaperone system, it is involved in the recovery of the cell from heat-induced damage, in cooperation with DnaK, DnaJ and GrpE. Acts before DnaK, in the processing of protein aggregates. Protein binding stimulates the ATPase activity; ATP hydrolysis unfolds the denatured protein aggregates, which probably helps expose new hydrophobic binding sites on the surface of ClpB-bound aggregates, contributing to the solubilization and refolding of denatured protein aggregates by DnaK (By similarity).</text>
</comment>
<comment type="subunit">
    <text evidence="1">Homohexamer. The oligomerization is ATP-dependent (By similarity).</text>
</comment>
<comment type="subcellular location">
    <subcellularLocation>
        <location evidence="3">Cytoplasm</location>
    </subcellularLocation>
</comment>
<comment type="domain">
    <text evidence="1">The Clp repeat (R) domain probably functions as a substrate-discriminating domain, recruiting aggregated proteins to the ClpB hexamer and/or stabilizing bound proteins. The NBD2 domain is responsible for oligomerization, whereas the NBD1 domain stabilizes the hexamer probably in an ATP-dependent manner. The movement of the coiled-coil domain is essential for ClpB ability to rescue proteins from an aggregated state, probably by pulling apart large aggregated proteins, which are bound between the coiled-coils motifs of adjacent ClpB subunits in the functional hexamer (By similarity).</text>
</comment>
<comment type="similarity">
    <text evidence="3">Belongs to the ClpA/ClpB family.</text>
</comment>
<accession>Q9ZEA9</accession>
<feature type="chain" id="PRO_0000191170" description="Chaperone protein ClpB">
    <location>
        <begin position="1"/>
        <end position="858"/>
    </location>
</feature>
<feature type="domain" description="Clp R" evidence="2">
    <location>
        <begin position="3"/>
        <end position="147"/>
    </location>
</feature>
<feature type="region of interest" description="Repeat 1" evidence="2">
    <location>
        <begin position="6"/>
        <end position="71"/>
    </location>
</feature>
<feature type="region of interest" description="Repeat 2" evidence="2">
    <location>
        <begin position="84"/>
        <end position="147"/>
    </location>
</feature>
<feature type="region of interest" description="NBD1" evidence="1">
    <location>
        <begin position="160"/>
        <end position="341"/>
    </location>
</feature>
<feature type="region of interest" description="Linker" evidence="1">
    <location>
        <begin position="342"/>
        <end position="544"/>
    </location>
</feature>
<feature type="region of interest" description="NBD2" evidence="1">
    <location>
        <begin position="554"/>
        <end position="764"/>
    </location>
</feature>
<feature type="region of interest" description="C-terminal" evidence="1">
    <location>
        <begin position="765"/>
        <end position="858"/>
    </location>
</feature>
<feature type="coiled-coil region" evidence="1">
    <location>
        <begin position="392"/>
        <end position="523"/>
    </location>
</feature>
<feature type="binding site" evidence="1">
    <location>
        <begin position="207"/>
        <end position="214"/>
    </location>
    <ligand>
        <name>ATP</name>
        <dbReference type="ChEBI" id="CHEBI:30616"/>
        <label>1</label>
    </ligand>
</feature>
<feature type="binding site" evidence="1">
    <location>
        <begin position="604"/>
        <end position="611"/>
    </location>
    <ligand>
        <name>ATP</name>
        <dbReference type="ChEBI" id="CHEBI:30616"/>
        <label>2</label>
    </ligand>
</feature>
<gene>
    <name type="primary">clpB</name>
    <name type="ordered locus">RP036</name>
</gene>
<protein>
    <recommendedName>
        <fullName>Chaperone protein ClpB</fullName>
    </recommendedName>
</protein>
<sequence length="858" mass="96291">MNIDKFTAHAKSVIANHQSLAIKNDHQQILPLHLLSSLLSEETGIIQALINNIGGNINLLKDQVQLELNKIPKIQVDGGGQIYYSAEDLKVLEKSSSIAKDSGDSFVTIERIFEALTYDNTIAGKILTNNGINSKKLATAILHLRKGKKADTESAENNYDALKRYGRDVTELAENGKLDPIIGRDEEIRRAVQVLSRRMKNNPVLIGAPGVGKTAIIEGLAQRIFSKDVPETLINCRIIELDIGALIAGAQYRGEFEKRLKAVLSEIKESSGEIILFIDELHLLVGTGKVDGAMDASNLLKPMLARGELHCIGATTLDEYRKYIEKDAALARRFQPVYVGEPSVEDTISILRGIKEKYELHHAVRISDSAIVAAATLSNRYITDRYLPDKAIDLIDEACSRMKIELSSKPEELDELDRRIIQIKIELAALKKENDEHSKKKITSLTEELKKLESKSYDMNTKWQAEKSKLQQAQKLKEELEQARIDLERAERDANLAKASELKYGIIPEIMNKLQEAENMDNKGLLKEIVSESDIASIISRITGIPIDTMLSSERERLLVIEQKLCESVIGQDEAIKGVSDAVRRSRSGIQDINRPLGSFLFLGPTGVGKTELTKALAGFLFDDRNALLRIDMSEYMEKHSISRLIGAPPGYIGYDQGGVLTESVRRRPYQVILFDEVEKAHLDIFNIMLQILDEGRLTDSQGITVDFKNTIIVLTSNLGAEILVNQKEGEDTYKVRDEVMQYVRAVFKPEFLNRLDEIILFHRLNRNNIHDIVKIQLGSLKKILLQQNIILEFDESALNYLAEKGYDPSFGARPLKRLIQREIQNNLAKMILAGEISSGNTVKIRREKEELSINIID</sequence>
<evidence type="ECO:0000250" key="1"/>
<evidence type="ECO:0000255" key="2">
    <source>
        <dbReference type="PROSITE-ProRule" id="PRU01251"/>
    </source>
</evidence>
<evidence type="ECO:0000305" key="3"/>